<reference key="1">
    <citation type="journal article" date="2005" name="Hum. Mol. Genet.">
        <title>SINE exonic insertion in the PTPLA gene leads to multiple splicing defects and segregates with the autosomal recessive centronuclear myopathy in dogs.</title>
        <authorList>
            <person name="Pele M."/>
            <person name="Tiret L."/>
            <person name="Kessler J.-L."/>
            <person name="Blot S."/>
            <person name="Panthier J.-J."/>
        </authorList>
    </citation>
    <scope>NUCLEOTIDE SEQUENCE [MRNA] (ISOFORMS 1 AND 2)</scope>
    <scope>DISEASE</scope>
    <scope>TISSUE SPECIFICITY</scope>
    <source>
        <tissue>Skeletal muscle</tissue>
    </source>
</reference>
<comment type="function">
    <text evidence="1">Catalyzes the third of the four reactions of the long-chain fatty acids elongation cycle. This endoplasmic reticulum-bound enzymatic process, allows the addition of two carbons to the chain of long- and very long-chain fatty acids/VLCFAs per cycle. This enzyme catalyzes the dehydration of the 3-hydroxyacyl-CoA intermediate into trans-2,3-enoyl-CoA, within each cycle of fatty acid elongation. Thereby, it participates in the production of VLCFAs of different chain lengths that are involved in multiple biological processes as precursors of membrane lipids and lipid mediators.</text>
</comment>
<comment type="catalytic activity">
    <reaction evidence="1">
        <text>a very-long-chain (3R)-3-hydroxyacyl-CoA = a very-long-chain (2E)-enoyl-CoA + H2O</text>
        <dbReference type="Rhea" id="RHEA:45812"/>
        <dbReference type="ChEBI" id="CHEBI:15377"/>
        <dbReference type="ChEBI" id="CHEBI:83728"/>
        <dbReference type="ChEBI" id="CHEBI:85440"/>
        <dbReference type="EC" id="4.2.1.134"/>
    </reaction>
    <physiologicalReaction direction="left-to-right" evidence="1">
        <dbReference type="Rhea" id="RHEA:45813"/>
    </physiologicalReaction>
</comment>
<comment type="catalytic activity">
    <reaction evidence="1">
        <text>(3R)-hydroxyhexadecanoyl-CoA = (2E)-hexadecenoyl-CoA + H2O</text>
        <dbReference type="Rhea" id="RHEA:39159"/>
        <dbReference type="ChEBI" id="CHEBI:15377"/>
        <dbReference type="ChEBI" id="CHEBI:61526"/>
        <dbReference type="ChEBI" id="CHEBI:74278"/>
    </reaction>
    <physiologicalReaction direction="left-to-right" evidence="1">
        <dbReference type="Rhea" id="RHEA:39160"/>
    </physiologicalReaction>
</comment>
<comment type="catalytic activity">
    <reaction evidence="1">
        <text>(3R)-hydroxyoctadecanoyl-CoA = (2E)-octadecenoyl-CoA + H2O</text>
        <dbReference type="Rhea" id="RHEA:39155"/>
        <dbReference type="ChEBI" id="CHEBI:15377"/>
        <dbReference type="ChEBI" id="CHEBI:71412"/>
        <dbReference type="ChEBI" id="CHEBI:76374"/>
    </reaction>
    <physiologicalReaction direction="left-to-right" evidence="1">
        <dbReference type="Rhea" id="RHEA:39156"/>
    </physiologicalReaction>
</comment>
<comment type="catalytic activity">
    <reaction evidence="1">
        <text>(3R)-hydroxyeicosanoyl-CoA = (2E)-eicosenoyl-CoA + H2O</text>
        <dbReference type="Rhea" id="RHEA:39175"/>
        <dbReference type="ChEBI" id="CHEBI:15377"/>
        <dbReference type="ChEBI" id="CHEBI:74691"/>
        <dbReference type="ChEBI" id="CHEBI:76373"/>
    </reaction>
    <physiologicalReaction direction="left-to-right" evidence="1">
        <dbReference type="Rhea" id="RHEA:39176"/>
    </physiologicalReaction>
</comment>
<comment type="catalytic activity">
    <reaction evidence="1">
        <text>(3R)-hydroxydocosanoyl-CoA = (2E)-docosenoyl-CoA + H2O</text>
        <dbReference type="Rhea" id="RHEA:39187"/>
        <dbReference type="ChEBI" id="CHEBI:15377"/>
        <dbReference type="ChEBI" id="CHEBI:74692"/>
        <dbReference type="ChEBI" id="CHEBI:76375"/>
    </reaction>
    <physiologicalReaction direction="left-to-right" evidence="1">
        <dbReference type="Rhea" id="RHEA:39188"/>
    </physiologicalReaction>
</comment>
<comment type="catalytic activity">
    <reaction evidence="1">
        <text>(3R)-hydroxytetracosanoyl-CoA = (2E)-tetracosenoyl-CoA + H2O</text>
        <dbReference type="Rhea" id="RHEA:39199"/>
        <dbReference type="ChEBI" id="CHEBI:15377"/>
        <dbReference type="ChEBI" id="CHEBI:74693"/>
        <dbReference type="ChEBI" id="CHEBI:76377"/>
    </reaction>
    <physiologicalReaction direction="left-to-right" evidence="1">
        <dbReference type="Rhea" id="RHEA:39200"/>
    </physiologicalReaction>
</comment>
<comment type="catalytic activity">
    <reaction evidence="1">
        <text>(3R)-hydroxyhexacosanoyl-CoA = (2E)-hexacosenoyl-CoA + H2O</text>
        <dbReference type="Rhea" id="RHEA:39211"/>
        <dbReference type="ChEBI" id="CHEBI:15377"/>
        <dbReference type="ChEBI" id="CHEBI:74281"/>
        <dbReference type="ChEBI" id="CHEBI:76378"/>
    </reaction>
    <physiologicalReaction direction="left-to-right" evidence="1">
        <dbReference type="Rhea" id="RHEA:39212"/>
    </physiologicalReaction>
</comment>
<comment type="pathway">
    <text evidence="1">Lipid metabolism; fatty acid biosynthesis.</text>
</comment>
<comment type="subunit">
    <text evidence="1">May interact with enzymes of the ELO family (including ELOVL1); with those enzymes that mediate condensation, the first of the four steps of the reaction cycle responsible for fatty acids elongation, may be part of a larger fatty acids elongase complex. Interacts with TECR (By similarity).</text>
</comment>
<comment type="subcellular location">
    <subcellularLocation>
        <location evidence="1">Endoplasmic reticulum membrane</location>
        <topology evidence="1">Multi-pass membrane protein</topology>
    </subcellularLocation>
</comment>
<comment type="alternative products">
    <event type="alternative splicing"/>
    <isoform>
        <id>Q4W1W1-1</id>
        <name>1</name>
        <name>PTPLAfl</name>
        <sequence type="displayed"/>
    </isoform>
    <isoform>
        <id>Q4W1W1-2</id>
        <name>2</name>
        <name>PTPLAd5</name>
        <sequence type="described" ref="VSP_035362"/>
    </isoform>
</comment>
<comment type="tissue specificity">
    <text evidence="5">Skeletal muscle.</text>
</comment>
<comment type="disease">
    <text evidence="5">Defects in HACD1 may be the cause of autosomal recessive centronuclear myopathy in Labradors.</text>
</comment>
<comment type="similarity">
    <text evidence="7">Belongs to the very long-chain fatty acids dehydratase HACD family.</text>
</comment>
<comment type="caution">
    <text evidence="1">Shares some similarity with tyrosine phosphatase proteins but it has no phosphatase activity.</text>
</comment>
<gene>
    <name type="primary">HACD1</name>
    <name evidence="7" type="synonym">PTPLA</name>
</gene>
<evidence type="ECO:0000250" key="1">
    <source>
        <dbReference type="UniProtKB" id="B0YJ81"/>
    </source>
</evidence>
<evidence type="ECO:0000250" key="2">
    <source>
        <dbReference type="UniProtKB" id="P40857"/>
    </source>
</evidence>
<evidence type="ECO:0000255" key="3"/>
<evidence type="ECO:0000256" key="4">
    <source>
        <dbReference type="SAM" id="MobiDB-lite"/>
    </source>
</evidence>
<evidence type="ECO:0000269" key="5">
    <source>
    </source>
</evidence>
<evidence type="ECO:0000303" key="6">
    <source>
    </source>
</evidence>
<evidence type="ECO:0000305" key="7"/>
<dbReference type="EC" id="4.2.1.134" evidence="1"/>
<dbReference type="EMBL" id="AJ876905">
    <property type="protein sequence ID" value="CAI46276.1"/>
    <property type="molecule type" value="mRNA"/>
</dbReference>
<dbReference type="EMBL" id="AJ876904">
    <property type="protein sequence ID" value="CAI46275.1"/>
    <property type="molecule type" value="mRNA"/>
</dbReference>
<dbReference type="RefSeq" id="NP_001020440.1">
    <molecule id="Q4W1W1-1"/>
    <property type="nucleotide sequence ID" value="NM_001025269.1"/>
</dbReference>
<dbReference type="FunCoup" id="Q4W1W1">
    <property type="interactions" value="499"/>
</dbReference>
<dbReference type="STRING" id="9615.ENSCAFP00000032576"/>
<dbReference type="GlyCosmos" id="Q4W1W1">
    <property type="glycosylation" value="1 site, No reported glycans"/>
</dbReference>
<dbReference type="PaxDb" id="9612-ENSCAFP00000032576"/>
<dbReference type="GeneID" id="574011"/>
<dbReference type="KEGG" id="cfa:574011"/>
<dbReference type="CTD" id="9200"/>
<dbReference type="eggNOG" id="KOG3187">
    <property type="taxonomic scope" value="Eukaryota"/>
</dbReference>
<dbReference type="InParanoid" id="Q4W1W1"/>
<dbReference type="OrthoDB" id="46988at2759"/>
<dbReference type="UniPathway" id="UPA00094"/>
<dbReference type="Proteomes" id="UP000002254">
    <property type="component" value="Unplaced"/>
</dbReference>
<dbReference type="Proteomes" id="UP000694429">
    <property type="component" value="Unplaced"/>
</dbReference>
<dbReference type="Proteomes" id="UP000694542">
    <property type="component" value="Unplaced"/>
</dbReference>
<dbReference type="Proteomes" id="UP000805418">
    <property type="component" value="Unplaced"/>
</dbReference>
<dbReference type="GO" id="GO:0005783">
    <property type="term" value="C:endoplasmic reticulum"/>
    <property type="evidence" value="ECO:0000250"/>
    <property type="project" value="UniProtKB"/>
</dbReference>
<dbReference type="GO" id="GO:0005789">
    <property type="term" value="C:endoplasmic reticulum membrane"/>
    <property type="evidence" value="ECO:0000318"/>
    <property type="project" value="GO_Central"/>
</dbReference>
<dbReference type="GO" id="GO:0018812">
    <property type="term" value="F:3-hydroxyacyl-CoA dehydratase activity"/>
    <property type="evidence" value="ECO:0000318"/>
    <property type="project" value="GO_Central"/>
</dbReference>
<dbReference type="GO" id="GO:0019899">
    <property type="term" value="F:enzyme binding"/>
    <property type="evidence" value="ECO:0000250"/>
    <property type="project" value="UniProtKB"/>
</dbReference>
<dbReference type="GO" id="GO:0004864">
    <property type="term" value="F:protein phosphatase inhibitor activity"/>
    <property type="evidence" value="ECO:0007669"/>
    <property type="project" value="UniProtKB-KW"/>
</dbReference>
<dbReference type="GO" id="GO:0102158">
    <property type="term" value="F:very-long-chain (3R)-3-hydroxyacyl-CoA dehydratase activity"/>
    <property type="evidence" value="ECO:0000250"/>
    <property type="project" value="UniProtKB"/>
</dbReference>
<dbReference type="GO" id="GO:0030497">
    <property type="term" value="P:fatty acid elongation"/>
    <property type="evidence" value="ECO:0000250"/>
    <property type="project" value="UniProtKB"/>
</dbReference>
<dbReference type="GO" id="GO:0030148">
    <property type="term" value="P:sphingolipid biosynthetic process"/>
    <property type="evidence" value="ECO:0000250"/>
    <property type="project" value="UniProtKB"/>
</dbReference>
<dbReference type="GO" id="GO:0042761">
    <property type="term" value="P:very long-chain fatty acid biosynthetic process"/>
    <property type="evidence" value="ECO:0000250"/>
    <property type="project" value="UniProtKB"/>
</dbReference>
<dbReference type="InterPro" id="IPR007482">
    <property type="entry name" value="Tyr_Pase-like_PTPLA"/>
</dbReference>
<dbReference type="PANTHER" id="PTHR11035">
    <property type="entry name" value="VERY-LONG-CHAIN (3R)-3-HYDROXYACYL-COA DEHYDRATASE"/>
    <property type="match status" value="1"/>
</dbReference>
<dbReference type="PANTHER" id="PTHR11035:SF22">
    <property type="entry name" value="VERY-LONG-CHAIN (3R)-3-HYDROXYACYL-COA DEHYDRATASE 1"/>
    <property type="match status" value="1"/>
</dbReference>
<dbReference type="Pfam" id="PF04387">
    <property type="entry name" value="PTPLA"/>
    <property type="match status" value="1"/>
</dbReference>
<sequence length="249" mass="28731">MASSEEDGTNGGASEAGEEKEAPGRRRRLGLLATVWLTFYNIAMTAGWLVLAIAMVRFYMEKGTHKGLYKSIQKTLKFFQTFALLEIVHCLIGIVPTSVIVAGVQVSSRIFMVWLITHSIKPIQNEESVVLFLVAWTVTEITRYSFYTFSLLDHLPYFIKWARYNFFIILYPVGVVGELLTIYAALPYVKKTGMFSIRLPNKYNVSFDYYYFLLITMASYIPLFPQLYFHMLRQRRKVLHGEVIVEKDD</sequence>
<feature type="chain" id="PRO_0000349314" description="Very-long-chain (3R)-3-hydroxyacyl-CoA dehydratase 1">
    <location>
        <begin position="1"/>
        <end position="249"/>
    </location>
</feature>
<feature type="topological domain" description="Cytoplasmic" evidence="3">
    <location>
        <begin position="1"/>
        <end position="36"/>
    </location>
</feature>
<feature type="transmembrane region" description="Helical" evidence="3">
    <location>
        <begin position="37"/>
        <end position="56"/>
    </location>
</feature>
<feature type="topological domain" description="Lumenal" evidence="3">
    <location>
        <begin position="57"/>
        <end position="75"/>
    </location>
</feature>
<feature type="transmembrane region" description="Helical" evidence="3">
    <location>
        <begin position="76"/>
        <end position="92"/>
    </location>
</feature>
<feature type="topological domain" description="Cytoplasmic" evidence="3">
    <location>
        <begin position="93"/>
        <end position="102"/>
    </location>
</feature>
<feature type="transmembrane region" description="Helical" evidence="3">
    <location>
        <begin position="103"/>
        <end position="120"/>
    </location>
</feature>
<feature type="topological domain" description="Lumenal" evidence="3">
    <location>
        <begin position="121"/>
        <end position="126"/>
    </location>
</feature>
<feature type="transmembrane region" description="Helical" evidence="3">
    <location>
        <begin position="127"/>
        <end position="141"/>
    </location>
</feature>
<feature type="topological domain" description="Cytoplasmic" evidence="3">
    <location>
        <begin position="142"/>
        <end position="164"/>
    </location>
</feature>
<feature type="transmembrane region" description="Helical" evidence="3">
    <location>
        <begin position="165"/>
        <end position="182"/>
    </location>
</feature>
<feature type="topological domain" description="Lumenal" evidence="3">
    <location>
        <begin position="183"/>
        <end position="212"/>
    </location>
</feature>
<feature type="transmembrane region" description="Helical" evidence="3">
    <location>
        <begin position="213"/>
        <end position="230"/>
    </location>
</feature>
<feature type="topological domain" description="Cytoplasmic" evidence="3">
    <location>
        <begin position="231"/>
        <end position="249"/>
    </location>
</feature>
<feature type="region of interest" description="Disordered" evidence="4">
    <location>
        <begin position="1"/>
        <end position="22"/>
    </location>
</feature>
<feature type="active site" evidence="2">
    <location>
        <position position="171"/>
    </location>
</feature>
<feature type="active site" evidence="2">
    <location>
        <position position="178"/>
    </location>
</feature>
<feature type="glycosylation site" description="N-linked (GlcNAc...) asparagine" evidence="3">
    <location>
        <position position="204"/>
    </location>
</feature>
<feature type="splice variant" id="VSP_035362" description="In isoform 2." evidence="6">
    <original>NEESVVLFLVAW</original>
    <variation>FFYHLISCRGCW</variation>
    <location>
        <begin position="125"/>
        <end position="136"/>
    </location>
</feature>
<name>HACD1_CANLF</name>
<organism>
    <name type="scientific">Canis lupus familiaris</name>
    <name type="common">Dog</name>
    <name type="synonym">Canis familiaris</name>
    <dbReference type="NCBI Taxonomy" id="9615"/>
    <lineage>
        <taxon>Eukaryota</taxon>
        <taxon>Metazoa</taxon>
        <taxon>Chordata</taxon>
        <taxon>Craniata</taxon>
        <taxon>Vertebrata</taxon>
        <taxon>Euteleostomi</taxon>
        <taxon>Mammalia</taxon>
        <taxon>Eutheria</taxon>
        <taxon>Laurasiatheria</taxon>
        <taxon>Carnivora</taxon>
        <taxon>Caniformia</taxon>
        <taxon>Canidae</taxon>
        <taxon>Canis</taxon>
    </lineage>
</organism>
<accession>Q4W1W1</accession>
<accession>Q4W1W0</accession>
<proteinExistence type="evidence at transcript level"/>
<protein>
    <recommendedName>
        <fullName evidence="7">Very-long-chain (3R)-3-hydroxyacyl-CoA dehydratase 1</fullName>
        <ecNumber evidence="1">4.2.1.134</ecNumber>
    </recommendedName>
    <alternativeName>
        <fullName evidence="7">3-hydroxyacyl-CoA dehydratase 1</fullName>
        <shortName evidence="7">HACD1</shortName>
    </alternativeName>
    <alternativeName>
        <fullName evidence="7">Protein-tyrosine phosphatase-like member A</fullName>
    </alternativeName>
</protein>
<keyword id="KW-0025">Alternative splicing</keyword>
<keyword id="KW-0256">Endoplasmic reticulum</keyword>
<keyword id="KW-0275">Fatty acid biosynthesis</keyword>
<keyword id="KW-0276">Fatty acid metabolism</keyword>
<keyword id="KW-0325">Glycoprotein</keyword>
<keyword id="KW-0444">Lipid biosynthesis</keyword>
<keyword id="KW-0443">Lipid metabolism</keyword>
<keyword id="KW-0456">Lyase</keyword>
<keyword id="KW-0472">Membrane</keyword>
<keyword id="KW-0650">Protein phosphatase inhibitor</keyword>
<keyword id="KW-1185">Reference proteome</keyword>
<keyword id="KW-0812">Transmembrane</keyword>
<keyword id="KW-1133">Transmembrane helix</keyword>